<dbReference type="EMBL" id="CH477689">
    <property type="protein sequence ID" value="EAT37254.1"/>
    <property type="molecule type" value="Genomic_DNA"/>
</dbReference>
<dbReference type="RefSeq" id="XP_001661064.1">
    <property type="nucleotide sequence ID" value="XM_001661014.1"/>
</dbReference>
<dbReference type="SMR" id="Q16S14"/>
<dbReference type="FunCoup" id="Q16S14">
    <property type="interactions" value="2072"/>
</dbReference>
<dbReference type="STRING" id="7159.Q16S14"/>
<dbReference type="PaxDb" id="7159-AAEL010742-PA"/>
<dbReference type="GeneID" id="5573819"/>
<dbReference type="KEGG" id="aag:5573819"/>
<dbReference type="CTD" id="34004"/>
<dbReference type="VEuPathDB" id="VectorBase:AAEL010742"/>
<dbReference type="eggNOG" id="KOG0465">
    <property type="taxonomic scope" value="Eukaryota"/>
</dbReference>
<dbReference type="HOGENOM" id="CLU_002794_4_0_1"/>
<dbReference type="InParanoid" id="Q16S14"/>
<dbReference type="OMA" id="GQFAKVQ"/>
<dbReference type="OrthoDB" id="198619at2759"/>
<dbReference type="PhylomeDB" id="Q16S14"/>
<dbReference type="UniPathway" id="UPA00345"/>
<dbReference type="Proteomes" id="UP000008820">
    <property type="component" value="Unassembled WGS sequence"/>
</dbReference>
<dbReference type="Proteomes" id="UP000682892">
    <property type="component" value="Unassembled WGS sequence"/>
</dbReference>
<dbReference type="GO" id="GO:0005739">
    <property type="term" value="C:mitochondrion"/>
    <property type="evidence" value="ECO:0007669"/>
    <property type="project" value="UniProtKB-SubCell"/>
</dbReference>
<dbReference type="GO" id="GO:0005525">
    <property type="term" value="F:GTP binding"/>
    <property type="evidence" value="ECO:0007669"/>
    <property type="project" value="UniProtKB-UniRule"/>
</dbReference>
<dbReference type="GO" id="GO:0003924">
    <property type="term" value="F:GTPase activity"/>
    <property type="evidence" value="ECO:0000250"/>
    <property type="project" value="UniProtKB"/>
</dbReference>
<dbReference type="GO" id="GO:0003746">
    <property type="term" value="F:translation elongation factor activity"/>
    <property type="evidence" value="ECO:0000250"/>
    <property type="project" value="UniProtKB"/>
</dbReference>
<dbReference type="GO" id="GO:0070125">
    <property type="term" value="P:mitochondrial translational elongation"/>
    <property type="evidence" value="ECO:0000250"/>
    <property type="project" value="UniProtKB"/>
</dbReference>
<dbReference type="CDD" id="cd01886">
    <property type="entry name" value="EF-G"/>
    <property type="match status" value="1"/>
</dbReference>
<dbReference type="CDD" id="cd16262">
    <property type="entry name" value="EFG_III"/>
    <property type="match status" value="1"/>
</dbReference>
<dbReference type="CDD" id="cd01434">
    <property type="entry name" value="EFG_mtEFG1_IV"/>
    <property type="match status" value="1"/>
</dbReference>
<dbReference type="CDD" id="cd04097">
    <property type="entry name" value="mtEFG1_C"/>
    <property type="match status" value="1"/>
</dbReference>
<dbReference type="CDD" id="cd04091">
    <property type="entry name" value="mtEFG1_II_like"/>
    <property type="match status" value="1"/>
</dbReference>
<dbReference type="FunFam" id="3.30.230.10:FF:000003">
    <property type="entry name" value="Elongation factor G"/>
    <property type="match status" value="1"/>
</dbReference>
<dbReference type="FunFam" id="3.30.70.240:FF:000001">
    <property type="entry name" value="Elongation factor G"/>
    <property type="match status" value="1"/>
</dbReference>
<dbReference type="FunFam" id="3.30.70.870:FF:000001">
    <property type="entry name" value="Elongation factor G"/>
    <property type="match status" value="1"/>
</dbReference>
<dbReference type="FunFam" id="2.40.30.10:FF:000022">
    <property type="entry name" value="Elongation factor G, mitochondrial"/>
    <property type="match status" value="1"/>
</dbReference>
<dbReference type="FunFam" id="3.40.50.300:FF:000539">
    <property type="entry name" value="Elongation factor G, mitochondrial"/>
    <property type="match status" value="1"/>
</dbReference>
<dbReference type="Gene3D" id="3.30.230.10">
    <property type="match status" value="1"/>
</dbReference>
<dbReference type="Gene3D" id="3.30.70.240">
    <property type="match status" value="1"/>
</dbReference>
<dbReference type="Gene3D" id="3.30.70.870">
    <property type="entry name" value="Elongation Factor G (Translational Gtpase), domain 3"/>
    <property type="match status" value="1"/>
</dbReference>
<dbReference type="Gene3D" id="3.40.50.300">
    <property type="entry name" value="P-loop containing nucleotide triphosphate hydrolases"/>
    <property type="match status" value="1"/>
</dbReference>
<dbReference type="Gene3D" id="2.40.30.10">
    <property type="entry name" value="Translation factors"/>
    <property type="match status" value="1"/>
</dbReference>
<dbReference type="HAMAP" id="MF_00054_B">
    <property type="entry name" value="EF_G_EF_2_B"/>
    <property type="match status" value="1"/>
</dbReference>
<dbReference type="InterPro" id="IPR041095">
    <property type="entry name" value="EFG_II"/>
</dbReference>
<dbReference type="InterPro" id="IPR009022">
    <property type="entry name" value="EFG_III"/>
</dbReference>
<dbReference type="InterPro" id="IPR035647">
    <property type="entry name" value="EFG_III/V"/>
</dbReference>
<dbReference type="InterPro" id="IPR047872">
    <property type="entry name" value="EFG_IV"/>
</dbReference>
<dbReference type="InterPro" id="IPR035649">
    <property type="entry name" value="EFG_V"/>
</dbReference>
<dbReference type="InterPro" id="IPR000640">
    <property type="entry name" value="EFG_V-like"/>
</dbReference>
<dbReference type="InterPro" id="IPR004161">
    <property type="entry name" value="EFTu-like_2"/>
</dbReference>
<dbReference type="InterPro" id="IPR031157">
    <property type="entry name" value="G_TR_CS"/>
</dbReference>
<dbReference type="InterPro" id="IPR027417">
    <property type="entry name" value="P-loop_NTPase"/>
</dbReference>
<dbReference type="InterPro" id="IPR020568">
    <property type="entry name" value="Ribosomal_Su5_D2-typ_SF"/>
</dbReference>
<dbReference type="InterPro" id="IPR014721">
    <property type="entry name" value="Ribsml_uS5_D2-typ_fold_subgr"/>
</dbReference>
<dbReference type="InterPro" id="IPR005225">
    <property type="entry name" value="Small_GTP-bd"/>
</dbReference>
<dbReference type="InterPro" id="IPR000795">
    <property type="entry name" value="T_Tr_GTP-bd_dom"/>
</dbReference>
<dbReference type="InterPro" id="IPR009000">
    <property type="entry name" value="Transl_B-barrel_sf"/>
</dbReference>
<dbReference type="InterPro" id="IPR004540">
    <property type="entry name" value="Transl_elong_EFG/EF2"/>
</dbReference>
<dbReference type="InterPro" id="IPR005517">
    <property type="entry name" value="Transl_elong_EFG/EF2_IV"/>
</dbReference>
<dbReference type="NCBIfam" id="TIGR00484">
    <property type="entry name" value="EF-G"/>
    <property type="match status" value="1"/>
</dbReference>
<dbReference type="NCBIfam" id="NF009381">
    <property type="entry name" value="PRK12740.1-5"/>
    <property type="match status" value="1"/>
</dbReference>
<dbReference type="NCBIfam" id="TIGR00231">
    <property type="entry name" value="small_GTP"/>
    <property type="match status" value="1"/>
</dbReference>
<dbReference type="PANTHER" id="PTHR43636">
    <property type="entry name" value="ELONGATION FACTOR G, MITOCHONDRIAL"/>
    <property type="match status" value="1"/>
</dbReference>
<dbReference type="PANTHER" id="PTHR43636:SF2">
    <property type="entry name" value="ELONGATION FACTOR G, MITOCHONDRIAL"/>
    <property type="match status" value="1"/>
</dbReference>
<dbReference type="Pfam" id="PF00679">
    <property type="entry name" value="EFG_C"/>
    <property type="match status" value="1"/>
</dbReference>
<dbReference type="Pfam" id="PF14492">
    <property type="entry name" value="EFG_III"/>
    <property type="match status" value="1"/>
</dbReference>
<dbReference type="Pfam" id="PF03764">
    <property type="entry name" value="EFG_IV"/>
    <property type="match status" value="1"/>
</dbReference>
<dbReference type="Pfam" id="PF00009">
    <property type="entry name" value="GTP_EFTU"/>
    <property type="match status" value="1"/>
</dbReference>
<dbReference type="Pfam" id="PF03144">
    <property type="entry name" value="GTP_EFTU_D2"/>
    <property type="match status" value="1"/>
</dbReference>
<dbReference type="PRINTS" id="PR00315">
    <property type="entry name" value="ELONGATNFCT"/>
</dbReference>
<dbReference type="SMART" id="SM00838">
    <property type="entry name" value="EFG_C"/>
    <property type="match status" value="1"/>
</dbReference>
<dbReference type="SMART" id="SM00889">
    <property type="entry name" value="EFG_IV"/>
    <property type="match status" value="1"/>
</dbReference>
<dbReference type="SUPFAM" id="SSF54980">
    <property type="entry name" value="EF-G C-terminal domain-like"/>
    <property type="match status" value="2"/>
</dbReference>
<dbReference type="SUPFAM" id="SSF52540">
    <property type="entry name" value="P-loop containing nucleoside triphosphate hydrolases"/>
    <property type="match status" value="1"/>
</dbReference>
<dbReference type="SUPFAM" id="SSF54211">
    <property type="entry name" value="Ribosomal protein S5 domain 2-like"/>
    <property type="match status" value="1"/>
</dbReference>
<dbReference type="SUPFAM" id="SSF50447">
    <property type="entry name" value="Translation proteins"/>
    <property type="match status" value="1"/>
</dbReference>
<dbReference type="PROSITE" id="PS00301">
    <property type="entry name" value="G_TR_1"/>
    <property type="match status" value="1"/>
</dbReference>
<dbReference type="PROSITE" id="PS51722">
    <property type="entry name" value="G_TR_2"/>
    <property type="match status" value="1"/>
</dbReference>
<feature type="transit peptide" description="Mitochondrion" evidence="1">
    <location>
        <begin position="1"/>
        <end position="14"/>
    </location>
</feature>
<feature type="chain" id="PRO_0000385542" description="Elongation factor G, mitochondrial">
    <location>
        <begin position="15"/>
        <end position="748"/>
    </location>
</feature>
<feature type="domain" description="tr-type G">
    <location>
        <begin position="40"/>
        <end position="318"/>
    </location>
</feature>
<feature type="binding site" evidence="1">
    <location>
        <begin position="49"/>
        <end position="56"/>
    </location>
    <ligand>
        <name>GTP</name>
        <dbReference type="ChEBI" id="CHEBI:37565"/>
    </ligand>
</feature>
<feature type="binding site" evidence="1">
    <location>
        <begin position="116"/>
        <end position="120"/>
    </location>
    <ligand>
        <name>GTP</name>
        <dbReference type="ChEBI" id="CHEBI:37565"/>
    </ligand>
</feature>
<feature type="binding site" evidence="1">
    <location>
        <begin position="170"/>
        <end position="173"/>
    </location>
    <ligand>
        <name>GTP</name>
        <dbReference type="ChEBI" id="CHEBI:37565"/>
    </ligand>
</feature>
<evidence type="ECO:0000255" key="1">
    <source>
        <dbReference type="HAMAP-Rule" id="MF_03061"/>
    </source>
</evidence>
<evidence type="ECO:0000305" key="2"/>
<comment type="function">
    <text evidence="1">Mitochondrial GTPase that catalyzes the GTP-dependent ribosomal translocation step during translation elongation. During this step, the ribosome changes from the pre-translocational (PRE) to the post-translocational (POST) state as the newly formed A-site-bound peptidyl-tRNA and P-site-bound deacylated tRNA move to the P and E sites, respectively. Catalyzes the coordinated movement of the two tRNA molecules, the mRNA and conformational changes in the ribosome.</text>
</comment>
<comment type="pathway">
    <text evidence="1">Protein biosynthesis; polypeptide chain elongation.</text>
</comment>
<comment type="subcellular location">
    <subcellularLocation>
        <location evidence="1">Mitochondrion</location>
    </subcellularLocation>
</comment>
<comment type="similarity">
    <text evidence="2">Belongs to the TRAFAC class translation factor GTPase superfamily. Classic translation factor GTPase family. EF-G/EF-2 subfamily.</text>
</comment>
<proteinExistence type="inferred from homology"/>
<sequence length="748" mass="83633">MTISSFLRVRHSLAAAKCVLENAKQSFSSHAAFAEHAKLERIRNIGISAHIDSGKTTLTERILFYTGRIKQMHEVKGKDNVGATMDSMELERQRGITIQSAATYTMWKDHNINIIDTPGHVDFTVEVERALRVLDGAILVLCSVGGVQSQTLTVNRQMKRYNVPCLAFINKLDRTGANPYRVLGQMRSKLNHNAAFIQLPIGVESNCKGIVDLVKQRALYFEDHLGLTVREDEIPQEMRAESDERRHELIEHLSNVDESIGELFLEEKTPTEQDIMAAIRRSALKRTFTPVLVGTALKNKGVQPLLDAVLNYLPHPGEVENIALIEKKGKEPQQIMLDPARDGKSPFVGLAFKLEAGRFGQLTYLRCYQGVLRKGDSIFNVRSGKKVRLARLVRLHSNNMEDVNEVYAGDIFALFGVDCASGDTFVTNPDLELSMESIFVPDPVVSMAIKPANNKDRDNFSKAVARFTKEDPTFRFAYDTDIKETLVSGMGELHLEIYAQRMEREYNCPVILGKPKVAFRETLVAPCEFDFLHKKQSGGQGQYARVTGVLEPLPPHQNTTIEFTDETVGTNVPKQFVPGIEKGFRQMAEKGLLSGHKLSGIKFRLQDGAHHIVDSSELAFMLAAQGAIKSVFENGSWQILEPIMMVEVTAPEEFQGTVIGQLNKRHGIITGTEGSEGWFTVYAEVPLNDMFGYAGELRSSTQGKGEFSMEYSRYSPCKPDVQEKLMQDYQIAQGNVVVDAKKQQKKKN</sequence>
<protein>
    <recommendedName>
        <fullName evidence="1">Elongation factor G, mitochondrial</fullName>
        <shortName evidence="1">EF-Gmt</shortName>
    </recommendedName>
    <alternativeName>
        <fullName evidence="1">Elongation factor G 1, mitochondrial</fullName>
        <shortName evidence="1">mEF-G 1</shortName>
    </alternativeName>
    <alternativeName>
        <fullName evidence="1">Elongation factor G1</fullName>
    </alternativeName>
</protein>
<reference key="1">
    <citation type="journal article" date="2007" name="Science">
        <title>Genome sequence of Aedes aegypti, a major arbovirus vector.</title>
        <authorList>
            <person name="Nene V."/>
            <person name="Wortman J.R."/>
            <person name="Lawson D."/>
            <person name="Haas B.J."/>
            <person name="Kodira C.D."/>
            <person name="Tu Z.J."/>
            <person name="Loftus B.J."/>
            <person name="Xi Z."/>
            <person name="Megy K."/>
            <person name="Grabherr M."/>
            <person name="Ren Q."/>
            <person name="Zdobnov E.M."/>
            <person name="Lobo N.F."/>
            <person name="Campbell K.S."/>
            <person name="Brown S.E."/>
            <person name="Bonaldo M.F."/>
            <person name="Zhu J."/>
            <person name="Sinkins S.P."/>
            <person name="Hogenkamp D.G."/>
            <person name="Amedeo P."/>
            <person name="Arensburger P."/>
            <person name="Atkinson P.W."/>
            <person name="Bidwell S.L."/>
            <person name="Biedler J."/>
            <person name="Birney E."/>
            <person name="Bruggner R.V."/>
            <person name="Costas J."/>
            <person name="Coy M.R."/>
            <person name="Crabtree J."/>
            <person name="Crawford M."/>
            <person name="DeBruyn B."/>
            <person name="DeCaprio D."/>
            <person name="Eiglmeier K."/>
            <person name="Eisenstadt E."/>
            <person name="El-Dorry H."/>
            <person name="Gelbart W.M."/>
            <person name="Gomes S.L."/>
            <person name="Hammond M."/>
            <person name="Hannick L.I."/>
            <person name="Hogan J.R."/>
            <person name="Holmes M.H."/>
            <person name="Jaffe D."/>
            <person name="Johnston S.J."/>
            <person name="Kennedy R.C."/>
            <person name="Koo H."/>
            <person name="Kravitz S."/>
            <person name="Kriventseva E.V."/>
            <person name="Kulp D."/>
            <person name="Labutti K."/>
            <person name="Lee E."/>
            <person name="Li S."/>
            <person name="Lovin D.D."/>
            <person name="Mao C."/>
            <person name="Mauceli E."/>
            <person name="Menck C.F."/>
            <person name="Miller J.R."/>
            <person name="Montgomery P."/>
            <person name="Mori A."/>
            <person name="Nascimento A.L."/>
            <person name="Naveira H.F."/>
            <person name="Nusbaum C."/>
            <person name="O'Leary S.B."/>
            <person name="Orvis J."/>
            <person name="Pertea M."/>
            <person name="Quesneville H."/>
            <person name="Reidenbach K.R."/>
            <person name="Rogers Y.-H.C."/>
            <person name="Roth C.W."/>
            <person name="Schneider J.R."/>
            <person name="Schatz M."/>
            <person name="Shumway M."/>
            <person name="Stanke M."/>
            <person name="Stinson E.O."/>
            <person name="Tubio J.M.C."/>
            <person name="Vanzee J.P."/>
            <person name="Verjovski-Almeida S."/>
            <person name="Werner D."/>
            <person name="White O.R."/>
            <person name="Wyder S."/>
            <person name="Zeng Q."/>
            <person name="Zhao Q."/>
            <person name="Zhao Y."/>
            <person name="Hill C.A."/>
            <person name="Raikhel A.S."/>
            <person name="Soares M.B."/>
            <person name="Knudson D.L."/>
            <person name="Lee N.H."/>
            <person name="Galagan J."/>
            <person name="Salzberg S.L."/>
            <person name="Paulsen I.T."/>
            <person name="Dimopoulos G."/>
            <person name="Collins F.H."/>
            <person name="Bruce B."/>
            <person name="Fraser-Liggett C.M."/>
            <person name="Severson D.W."/>
        </authorList>
    </citation>
    <scope>NUCLEOTIDE SEQUENCE [LARGE SCALE GENOMIC DNA]</scope>
    <source>
        <strain>LVPib12</strain>
    </source>
</reference>
<accession>Q16S14</accession>
<name>EFGM_AEDAE</name>
<gene>
    <name type="ORF">AAEL010742</name>
</gene>
<organism>
    <name type="scientific">Aedes aegypti</name>
    <name type="common">Yellowfever mosquito</name>
    <name type="synonym">Culex aegypti</name>
    <dbReference type="NCBI Taxonomy" id="7159"/>
    <lineage>
        <taxon>Eukaryota</taxon>
        <taxon>Metazoa</taxon>
        <taxon>Ecdysozoa</taxon>
        <taxon>Arthropoda</taxon>
        <taxon>Hexapoda</taxon>
        <taxon>Insecta</taxon>
        <taxon>Pterygota</taxon>
        <taxon>Neoptera</taxon>
        <taxon>Endopterygota</taxon>
        <taxon>Diptera</taxon>
        <taxon>Nematocera</taxon>
        <taxon>Culicoidea</taxon>
        <taxon>Culicidae</taxon>
        <taxon>Culicinae</taxon>
        <taxon>Aedini</taxon>
        <taxon>Aedes</taxon>
        <taxon>Stegomyia</taxon>
    </lineage>
</organism>
<keyword id="KW-0251">Elongation factor</keyword>
<keyword id="KW-0342">GTP-binding</keyword>
<keyword id="KW-0496">Mitochondrion</keyword>
<keyword id="KW-0547">Nucleotide-binding</keyword>
<keyword id="KW-0648">Protein biosynthesis</keyword>
<keyword id="KW-1185">Reference proteome</keyword>
<keyword id="KW-0809">Transit peptide</keyword>